<sequence length="714" mass="77072">MEMTSAFTLNVRLDNIAVITIDVPGEKMNTLKAEFASQVRAIIKQLRENKELRGVVFVSAKPDNFIAGADINMIGNCKTAQEAEALARQGQQLMAEIHALPIQVIAAIHGACLGGGLELALACHGRVCTDDPKTVLGLPEVQLGLLPGSGGTQRLPRLIGVSTALEMILTGKQLRAKQALKLGLVDDVVPHSILLEAAVELAKKERPSSRPLPVRERILAGPLGRALLFKMVGKKTEHKTQGNYPATERILEVVETGLAQGTSSGYDAEARAFGELAMTPQSQALRSIFFASTDVKKDPGSDAPPAPLNSVGILGGGLMGGGIAYVTACKAGIPVRIKDINPQGINHALKYSWDQLEGKVRRRHLKASERDKQLALISGTTDYRGFAHRDLIIEAVFENLELKQQMVAEVEQNCAAHTIFASNTSSLPIGDIAAHATRPEQVIGLHFFSPVEKMPLVEIIPHAGTSAQTIATTVKLAKKQGKTPIVVRDKAGFYVNRILAPYINEAIRMLTQGERVEHIDAALVKFGFPVGPIQLLDEVGIDTGTKIIPVLEAAYGERFSAPANVVSSILNDDRKGRKNGRGFYLYGQKGRKSKKQVDPAIYPLIGTQGQGRISAPQVAERCVMLMLNEAVRCVDEQVIRSVRDGDIGAVFGIGFPPFLGGPFRYIDSLGAGEVVAIMQRLATQYGSRFTPCERLVEMGARGESFWKTTATDLQ</sequence>
<name>FADJ_ECOLI</name>
<organism>
    <name type="scientific">Escherichia coli (strain K12)</name>
    <dbReference type="NCBI Taxonomy" id="83333"/>
    <lineage>
        <taxon>Bacteria</taxon>
        <taxon>Pseudomonadati</taxon>
        <taxon>Pseudomonadota</taxon>
        <taxon>Gammaproteobacteria</taxon>
        <taxon>Enterobacterales</taxon>
        <taxon>Enterobacteriaceae</taxon>
        <taxon>Escherichia</taxon>
    </lineage>
</organism>
<evidence type="ECO:0000250" key="1"/>
<evidence type="ECO:0000269" key="2">
    <source>
    </source>
</evidence>
<evidence type="ECO:0000269" key="3">
    <source>
    </source>
</evidence>
<evidence type="ECO:0000305" key="4"/>
<evidence type="ECO:0007829" key="5">
    <source>
        <dbReference type="PDB" id="6YSV"/>
    </source>
</evidence>
<accession>P77399</accession>
<accession>Q6KCX2</accession>
<reference key="1">
    <citation type="journal article" date="1997" name="DNA Res.">
        <title>Construction of a contiguous 874-kb sequence of the Escherichia coli-K12 genome corresponding to 50.0-68.8 min on the linkage map and analysis of its sequence features.</title>
        <authorList>
            <person name="Yamamoto Y."/>
            <person name="Aiba H."/>
            <person name="Baba T."/>
            <person name="Hayashi K."/>
            <person name="Inada T."/>
            <person name="Isono K."/>
            <person name="Itoh T."/>
            <person name="Kimura S."/>
            <person name="Kitagawa M."/>
            <person name="Makino K."/>
            <person name="Miki T."/>
            <person name="Mitsuhashi N."/>
            <person name="Mizobuchi K."/>
            <person name="Mori H."/>
            <person name="Nakade S."/>
            <person name="Nakamura Y."/>
            <person name="Nashimoto H."/>
            <person name="Oshima T."/>
            <person name="Oyama S."/>
            <person name="Saito N."/>
            <person name="Sampei G."/>
            <person name="Satoh Y."/>
            <person name="Sivasundaram S."/>
            <person name="Tagami H."/>
            <person name="Takahashi H."/>
            <person name="Takeda J."/>
            <person name="Takemoto K."/>
            <person name="Uehara K."/>
            <person name="Wada C."/>
            <person name="Yamagata S."/>
            <person name="Horiuchi T."/>
        </authorList>
    </citation>
    <scope>NUCLEOTIDE SEQUENCE [LARGE SCALE GENOMIC DNA]</scope>
    <source>
        <strain>K12 / W3110 / ATCC 27325 / DSM 5911</strain>
    </source>
</reference>
<reference key="2">
    <citation type="journal article" date="1997" name="Science">
        <title>The complete genome sequence of Escherichia coli K-12.</title>
        <authorList>
            <person name="Blattner F.R."/>
            <person name="Plunkett G. III"/>
            <person name="Bloch C.A."/>
            <person name="Perna N.T."/>
            <person name="Burland V."/>
            <person name="Riley M."/>
            <person name="Collado-Vides J."/>
            <person name="Glasner J.D."/>
            <person name="Rode C.K."/>
            <person name="Mayhew G.F."/>
            <person name="Gregor J."/>
            <person name="Davis N.W."/>
            <person name="Kirkpatrick H.A."/>
            <person name="Goeden M.A."/>
            <person name="Rose D.J."/>
            <person name="Mau B."/>
            <person name="Shao Y."/>
        </authorList>
    </citation>
    <scope>NUCLEOTIDE SEQUENCE [LARGE SCALE GENOMIC DNA]</scope>
    <source>
        <strain>K12 / MG1655 / ATCC 47076</strain>
    </source>
</reference>
<reference key="3">
    <citation type="journal article" date="2006" name="Mol. Syst. Biol.">
        <title>Highly accurate genome sequences of Escherichia coli K-12 strains MG1655 and W3110.</title>
        <authorList>
            <person name="Hayashi K."/>
            <person name="Morooka N."/>
            <person name="Yamamoto Y."/>
            <person name="Fujita K."/>
            <person name="Isono K."/>
            <person name="Choi S."/>
            <person name="Ohtsubo E."/>
            <person name="Baba T."/>
            <person name="Wanner B.L."/>
            <person name="Mori H."/>
            <person name="Horiuchi T."/>
        </authorList>
    </citation>
    <scope>NUCLEOTIDE SEQUENCE [LARGE SCALE GENOMIC DNA]</scope>
    <source>
        <strain>K12 / W3110 / ATCC 27325 / DSM 5911</strain>
    </source>
</reference>
<reference key="4">
    <citation type="journal article" date="2002" name="J. Bacteriol.">
        <title>YfcX enables medium-chain-length poly(3-hydroxyalkanoate) formation from fatty acids in recombinant Escherichia coli fadB strains.</title>
        <authorList>
            <person name="Snell K.D."/>
            <person name="Feng F."/>
            <person name="Zhong L."/>
            <person name="Martin D."/>
            <person name="Madison L.L."/>
        </authorList>
    </citation>
    <scope>FUNCTION</scope>
    <scope>CATALYTIC ACTIVITY</scope>
    <source>
        <strain>K12 / MG1655 / ATCC 47076</strain>
    </source>
</reference>
<reference key="5">
    <citation type="journal article" date="2003" name="Mol. Microbiol.">
        <title>A new Escherichia coli metabolic competency: growth on fatty acids by a novel anaerobic beta-oxidation pathway.</title>
        <authorList>
            <person name="Campbell J.W."/>
            <person name="Morgan-Kiss R.M."/>
            <person name="Cronan J.E. Jr."/>
        </authorList>
    </citation>
    <scope>FUNCTION IN ANAEROBIC BETA-OXIDATION PATHWAY</scope>
    <source>
        <strain>K12 / MG1655 / ATCC 47076</strain>
    </source>
</reference>
<proteinExistence type="evidence at protein level"/>
<feature type="chain" id="PRO_0000109298" description="Fatty acid oxidation complex subunit alpha">
    <location>
        <begin position="1"/>
        <end position="714"/>
    </location>
</feature>
<feature type="region of interest" description="Enoyl-CoA hydratase">
    <location>
        <begin position="1"/>
        <end position="190"/>
    </location>
</feature>
<feature type="region of interest" description="3-hydroxyacyl-CoA dehydrogenase">
    <location>
        <begin position="306"/>
        <end position="714"/>
    </location>
</feature>
<feature type="site" description="Important for catalytic activity" evidence="1">
    <location>
        <position position="118"/>
    </location>
</feature>
<feature type="site" description="Important for catalytic activity" evidence="1">
    <location>
        <position position="140"/>
    </location>
</feature>
<feature type="strand" evidence="5">
    <location>
        <begin position="6"/>
        <end position="11"/>
    </location>
</feature>
<feature type="strand" evidence="5">
    <location>
        <begin position="15"/>
        <end position="21"/>
    </location>
</feature>
<feature type="strand" evidence="5">
    <location>
        <begin position="24"/>
        <end position="28"/>
    </location>
</feature>
<feature type="helix" evidence="5">
    <location>
        <begin position="33"/>
        <end position="35"/>
    </location>
</feature>
<feature type="helix" evidence="5">
    <location>
        <begin position="36"/>
        <end position="46"/>
    </location>
</feature>
<feature type="strand" evidence="5">
    <location>
        <begin position="54"/>
        <end position="58"/>
    </location>
</feature>
<feature type="strand" evidence="5">
    <location>
        <begin position="61"/>
        <end position="66"/>
    </location>
</feature>
<feature type="helix" evidence="5">
    <location>
        <begin position="72"/>
        <end position="75"/>
    </location>
</feature>
<feature type="helix" evidence="5">
    <location>
        <begin position="80"/>
        <end position="98"/>
    </location>
</feature>
<feature type="strand" evidence="5">
    <location>
        <begin position="101"/>
        <end position="108"/>
    </location>
</feature>
<feature type="strand" evidence="5">
    <location>
        <begin position="110"/>
        <end position="113"/>
    </location>
</feature>
<feature type="helix" evidence="5">
    <location>
        <begin position="115"/>
        <end position="122"/>
    </location>
</feature>
<feature type="strand" evidence="5">
    <location>
        <begin position="123"/>
        <end position="129"/>
    </location>
</feature>
<feature type="strand" evidence="5">
    <location>
        <begin position="135"/>
        <end position="137"/>
    </location>
</feature>
<feature type="helix" evidence="5">
    <location>
        <begin position="139"/>
        <end position="143"/>
    </location>
</feature>
<feature type="turn" evidence="5">
    <location>
        <begin position="148"/>
        <end position="150"/>
    </location>
</feature>
<feature type="helix" evidence="5">
    <location>
        <begin position="151"/>
        <end position="154"/>
    </location>
</feature>
<feature type="turn" evidence="5">
    <location>
        <begin position="155"/>
        <end position="158"/>
    </location>
</feature>
<feature type="helix" evidence="5">
    <location>
        <begin position="161"/>
        <end position="170"/>
    </location>
</feature>
<feature type="helix" evidence="5">
    <location>
        <begin position="176"/>
        <end position="181"/>
    </location>
</feature>
<feature type="strand" evidence="5">
    <location>
        <begin position="184"/>
        <end position="189"/>
    </location>
</feature>
<feature type="helix" evidence="5">
    <location>
        <begin position="191"/>
        <end position="193"/>
    </location>
</feature>
<feature type="helix" evidence="5">
    <location>
        <begin position="194"/>
        <end position="203"/>
    </location>
</feature>
<feature type="strand" evidence="5">
    <location>
        <begin position="204"/>
        <end position="206"/>
    </location>
</feature>
<feature type="helix" evidence="5">
    <location>
        <begin position="214"/>
        <end position="218"/>
    </location>
</feature>
<feature type="helix" evidence="5">
    <location>
        <begin position="222"/>
        <end position="240"/>
    </location>
</feature>
<feature type="helix" evidence="5">
    <location>
        <begin position="245"/>
        <end position="259"/>
    </location>
</feature>
<feature type="helix" evidence="5">
    <location>
        <begin position="262"/>
        <end position="278"/>
    </location>
</feature>
<feature type="helix" evidence="5">
    <location>
        <begin position="280"/>
        <end position="297"/>
    </location>
</feature>
<feature type="strand" evidence="5">
    <location>
        <begin position="300"/>
        <end position="303"/>
    </location>
</feature>
<feature type="strand" evidence="5">
    <location>
        <begin position="311"/>
        <end position="314"/>
    </location>
</feature>
<feature type="helix" evidence="5">
    <location>
        <begin position="317"/>
        <end position="329"/>
    </location>
</feature>
<feature type="strand" evidence="5">
    <location>
        <begin position="335"/>
        <end position="338"/>
    </location>
</feature>
<feature type="helix" evidence="5">
    <location>
        <begin position="342"/>
        <end position="360"/>
    </location>
</feature>
<feature type="strand" evidence="5">
    <location>
        <begin position="361"/>
        <end position="364"/>
    </location>
</feature>
<feature type="helix" evidence="5">
    <location>
        <begin position="367"/>
        <end position="373"/>
    </location>
</feature>
<feature type="helix" evidence="5">
    <location>
        <begin position="374"/>
        <end position="376"/>
    </location>
</feature>
<feature type="strand" evidence="5">
    <location>
        <begin position="377"/>
        <end position="383"/>
    </location>
</feature>
<feature type="strand" evidence="5">
    <location>
        <begin position="390"/>
        <end position="394"/>
    </location>
</feature>
<feature type="helix" evidence="5">
    <location>
        <begin position="400"/>
        <end position="413"/>
    </location>
</feature>
<feature type="strand" evidence="5">
    <location>
        <begin position="419"/>
        <end position="422"/>
    </location>
</feature>
<feature type="strand" evidence="5">
    <location>
        <begin position="425"/>
        <end position="427"/>
    </location>
</feature>
<feature type="helix" evidence="5">
    <location>
        <begin position="429"/>
        <end position="432"/>
    </location>
</feature>
<feature type="turn" evidence="5">
    <location>
        <begin position="433"/>
        <end position="435"/>
    </location>
</feature>
<feature type="helix" evidence="5">
    <location>
        <begin position="439"/>
        <end position="441"/>
    </location>
</feature>
<feature type="strand" evidence="5">
    <location>
        <begin position="442"/>
        <end position="446"/>
    </location>
</feature>
<feature type="turn" evidence="5">
    <location>
        <begin position="451"/>
        <end position="453"/>
    </location>
</feature>
<feature type="strand" evidence="5">
    <location>
        <begin position="456"/>
        <end position="461"/>
    </location>
</feature>
<feature type="helix" evidence="5">
    <location>
        <begin position="467"/>
        <end position="479"/>
    </location>
</feature>
<feature type="strand" evidence="5">
    <location>
        <begin position="483"/>
        <end position="486"/>
    </location>
</feature>
<feature type="turn" evidence="5">
    <location>
        <begin position="491"/>
        <end position="494"/>
    </location>
</feature>
<feature type="helix" evidence="5">
    <location>
        <begin position="495"/>
        <end position="511"/>
    </location>
</feature>
<feature type="helix" evidence="5">
    <location>
        <begin position="516"/>
        <end position="526"/>
    </location>
</feature>
<feature type="helix" evidence="5">
    <location>
        <begin position="532"/>
        <end position="539"/>
    </location>
</feature>
<feature type="helix" evidence="5">
    <location>
        <begin position="541"/>
        <end position="545"/>
    </location>
</feature>
<feature type="helix" evidence="5">
    <location>
        <begin position="548"/>
        <end position="555"/>
    </location>
</feature>
<feature type="helix" evidence="5">
    <location>
        <begin position="557"/>
        <end position="559"/>
    </location>
</feature>
<feature type="helix" evidence="5">
    <location>
        <begin position="565"/>
        <end position="570"/>
    </location>
</feature>
<feature type="turn" evidence="5">
    <location>
        <begin position="571"/>
        <end position="573"/>
    </location>
</feature>
<feature type="turn" evidence="5">
    <location>
        <begin position="577"/>
        <end position="580"/>
    </location>
</feature>
<feature type="strand" evidence="5">
    <location>
        <begin position="581"/>
        <end position="584"/>
    </location>
</feature>
<feature type="helix" evidence="5">
    <location>
        <begin position="601"/>
        <end position="604"/>
    </location>
</feature>
<feature type="helix" evidence="5">
    <location>
        <begin position="615"/>
        <end position="635"/>
    </location>
</feature>
<feature type="strand" evidence="5">
    <location>
        <begin position="638"/>
        <end position="641"/>
    </location>
</feature>
<feature type="helix" evidence="5">
    <location>
        <begin position="642"/>
        <end position="652"/>
    </location>
</feature>
<feature type="helix" evidence="5">
    <location>
        <begin position="657"/>
        <end position="659"/>
    </location>
</feature>
<feature type="helix" evidence="5">
    <location>
        <begin position="662"/>
        <end position="669"/>
    </location>
</feature>
<feature type="helix" evidence="5">
    <location>
        <begin position="671"/>
        <end position="684"/>
    </location>
</feature>
<feature type="helix" evidence="5">
    <location>
        <begin position="687"/>
        <end position="689"/>
    </location>
</feature>
<feature type="helix" evidence="5">
    <location>
        <begin position="693"/>
        <end position="700"/>
    </location>
</feature>
<feature type="strand" evidence="5">
    <location>
        <begin position="705"/>
        <end position="708"/>
    </location>
</feature>
<comment type="function">
    <text evidence="2 3">Catalyzes the formation of a hydroxyacyl-CoA by addition of water on enoyl-CoA. Also exhibits 3-hydroxyacyl-CoA epimerase and 3-hydroxyacyl-CoA dehydrogenase activities. Strongly involved in the anaerobic degradation of long and medium-chain fatty acids in the presence of nitrate and weakly involved in the aerobic degradation of long-chain fatty acids.</text>
</comment>
<comment type="catalytic activity">
    <reaction evidence="2">
        <text>a (3S)-3-hydroxyacyl-CoA = a (2E)-enoyl-CoA + H2O</text>
        <dbReference type="Rhea" id="RHEA:16105"/>
        <dbReference type="ChEBI" id="CHEBI:15377"/>
        <dbReference type="ChEBI" id="CHEBI:57318"/>
        <dbReference type="ChEBI" id="CHEBI:58856"/>
        <dbReference type="EC" id="4.2.1.17"/>
    </reaction>
</comment>
<comment type="catalytic activity">
    <reaction>
        <text>a 4-saturated-(3S)-3-hydroxyacyl-CoA = a (3E)-enoyl-CoA + H2O</text>
        <dbReference type="Rhea" id="RHEA:20724"/>
        <dbReference type="ChEBI" id="CHEBI:15377"/>
        <dbReference type="ChEBI" id="CHEBI:58521"/>
        <dbReference type="ChEBI" id="CHEBI:137480"/>
        <dbReference type="EC" id="4.2.1.17"/>
    </reaction>
</comment>
<comment type="catalytic activity">
    <reaction evidence="2">
        <text>a (3S)-3-hydroxyacyl-CoA + NAD(+) = a 3-oxoacyl-CoA + NADH + H(+)</text>
        <dbReference type="Rhea" id="RHEA:22432"/>
        <dbReference type="ChEBI" id="CHEBI:15378"/>
        <dbReference type="ChEBI" id="CHEBI:57318"/>
        <dbReference type="ChEBI" id="CHEBI:57540"/>
        <dbReference type="ChEBI" id="CHEBI:57945"/>
        <dbReference type="ChEBI" id="CHEBI:90726"/>
        <dbReference type="EC" id="1.1.1.35"/>
    </reaction>
</comment>
<comment type="catalytic activity">
    <reaction>
        <text>(3S)-3-hydroxybutanoyl-CoA = (3R)-3-hydroxybutanoyl-CoA</text>
        <dbReference type="Rhea" id="RHEA:21760"/>
        <dbReference type="ChEBI" id="CHEBI:57315"/>
        <dbReference type="ChEBI" id="CHEBI:57316"/>
        <dbReference type="EC" id="5.1.2.3"/>
    </reaction>
</comment>
<comment type="pathway">
    <text>Lipid metabolism; fatty acid beta-oxidation.</text>
</comment>
<comment type="subunit">
    <text evidence="1">Heterotetramer of two alpha chains (FadJ) and two beta chains (FadI).</text>
</comment>
<comment type="interaction">
    <interactant intactId="EBI-545361">
        <id>P77399</id>
    </interactant>
    <interactant intactId="EBI-545379">
        <id>P77293</id>
        <label>yfdH</label>
    </interactant>
    <organismsDiffer>false</organismsDiffer>
    <experiments>2</experiments>
</comment>
<comment type="subcellular location">
    <subcellularLocation>
        <location evidence="1">Cytoplasm</location>
    </subcellularLocation>
</comment>
<comment type="induction">
    <text>Unlike the aerobic pathway, the anaerobic pathway is not strongly repressed by FadR regulatory protein.</text>
</comment>
<comment type="similarity">
    <text evidence="4">In the N-terminal section; belongs to the enoyl-CoA hydratase/isomerase family.</text>
</comment>
<comment type="similarity">
    <text evidence="4">In the central section; belongs to the 3-hydroxyacyl-CoA dehydrogenase family.</text>
</comment>
<keyword id="KW-0002">3D-structure</keyword>
<keyword id="KW-0963">Cytoplasm</keyword>
<keyword id="KW-0276">Fatty acid metabolism</keyword>
<keyword id="KW-0413">Isomerase</keyword>
<keyword id="KW-0442">Lipid degradation</keyword>
<keyword id="KW-0443">Lipid metabolism</keyword>
<keyword id="KW-0456">Lyase</keyword>
<keyword id="KW-0511">Multifunctional enzyme</keyword>
<keyword id="KW-0520">NAD</keyword>
<keyword id="KW-0560">Oxidoreductase</keyword>
<keyword id="KW-1185">Reference proteome</keyword>
<dbReference type="EC" id="4.2.1.17" evidence="2"/>
<dbReference type="EC" id="5.1.2.3"/>
<dbReference type="EC" id="1.1.1.35" evidence="2"/>
<dbReference type="EMBL" id="U00096">
    <property type="protein sequence ID" value="AAC75401.1"/>
    <property type="molecule type" value="Genomic_DNA"/>
</dbReference>
<dbReference type="EMBL" id="AP009048">
    <property type="protein sequence ID" value="BAA16195.1"/>
    <property type="molecule type" value="Genomic_DNA"/>
</dbReference>
<dbReference type="PIR" id="C65007">
    <property type="entry name" value="C65007"/>
</dbReference>
<dbReference type="RefSeq" id="NP_416843.1">
    <property type="nucleotide sequence ID" value="NC_000913.3"/>
</dbReference>
<dbReference type="RefSeq" id="WP_000426176.1">
    <property type="nucleotide sequence ID" value="NZ_LN832404.1"/>
</dbReference>
<dbReference type="PDB" id="6YSV">
    <property type="method" value="X-ray"/>
    <property type="resolution" value="2.70 A"/>
    <property type="chains" value="A/B=1-714"/>
</dbReference>
<dbReference type="PDB" id="6YSW">
    <property type="method" value="X-ray"/>
    <property type="resolution" value="2.82 A"/>
    <property type="chains" value="A/B=1-714"/>
</dbReference>
<dbReference type="PDB" id="8BNR">
    <property type="method" value="EM"/>
    <property type="resolution" value="10.30 A"/>
    <property type="chains" value="C/D/G/H=1-714"/>
</dbReference>
<dbReference type="PDB" id="8BNU">
    <property type="method" value="EM"/>
    <property type="resolution" value="3.55 A"/>
    <property type="chains" value="C/D=1-710"/>
</dbReference>
<dbReference type="PDB" id="8BRJ">
    <property type="method" value="EM"/>
    <property type="resolution" value="4.08 A"/>
    <property type="chains" value="C=1-714"/>
</dbReference>
<dbReference type="PDBsum" id="6YSV"/>
<dbReference type="PDBsum" id="6YSW"/>
<dbReference type="PDBsum" id="8BNR"/>
<dbReference type="PDBsum" id="8BNU"/>
<dbReference type="PDBsum" id="8BRJ"/>
<dbReference type="EMDB" id="EMD-16134"/>
<dbReference type="EMDB" id="EMD-16135"/>
<dbReference type="EMDB" id="EMD-16217"/>
<dbReference type="SASBDB" id="P77399"/>
<dbReference type="SMR" id="P77399"/>
<dbReference type="BioGRID" id="4260533">
    <property type="interactions" value="255"/>
</dbReference>
<dbReference type="ComplexPortal" id="CPX-3966">
    <property type="entry name" value="fadJI fatty acid oxidation complex, anaerobic conditions"/>
</dbReference>
<dbReference type="DIP" id="DIP-11990N"/>
<dbReference type="FunCoup" id="P77399">
    <property type="interactions" value="470"/>
</dbReference>
<dbReference type="IntAct" id="P77399">
    <property type="interactions" value="8"/>
</dbReference>
<dbReference type="STRING" id="511145.b2341"/>
<dbReference type="jPOST" id="P77399"/>
<dbReference type="PaxDb" id="511145-b2341"/>
<dbReference type="EnsemblBacteria" id="AAC75401">
    <property type="protein sequence ID" value="AAC75401"/>
    <property type="gene ID" value="b2341"/>
</dbReference>
<dbReference type="GeneID" id="949097"/>
<dbReference type="KEGG" id="ecj:JW2338"/>
<dbReference type="KEGG" id="eco:b2341"/>
<dbReference type="KEGG" id="ecoc:C3026_13030"/>
<dbReference type="PATRIC" id="fig|1411691.4.peg.4391"/>
<dbReference type="EchoBASE" id="EB3879"/>
<dbReference type="eggNOG" id="COG1024">
    <property type="taxonomic scope" value="Bacteria"/>
</dbReference>
<dbReference type="eggNOG" id="COG1250">
    <property type="taxonomic scope" value="Bacteria"/>
</dbReference>
<dbReference type="HOGENOM" id="CLU_009834_16_1_6"/>
<dbReference type="InParanoid" id="P77399"/>
<dbReference type="OMA" id="ESTTIRW"/>
<dbReference type="OrthoDB" id="5389341at2"/>
<dbReference type="PhylomeDB" id="P77399"/>
<dbReference type="BioCyc" id="EcoCyc:G7212-MONOMER"/>
<dbReference type="BioCyc" id="MetaCyc:G7212-MONOMER"/>
<dbReference type="UniPathway" id="UPA00659"/>
<dbReference type="PRO" id="PR:P77399"/>
<dbReference type="Proteomes" id="UP000000625">
    <property type="component" value="Chromosome"/>
</dbReference>
<dbReference type="GO" id="GO:0005737">
    <property type="term" value="C:cytoplasm"/>
    <property type="evidence" value="ECO:0007669"/>
    <property type="project" value="UniProtKB-SubCell"/>
</dbReference>
<dbReference type="GO" id="GO:0036125">
    <property type="term" value="C:fatty acid beta-oxidation multienzyme complex"/>
    <property type="evidence" value="ECO:0000314"/>
    <property type="project" value="ComplexPortal"/>
</dbReference>
<dbReference type="GO" id="GO:0003857">
    <property type="term" value="F:3-hydroxyacyl-CoA dehydrogenase activity"/>
    <property type="evidence" value="ECO:0000314"/>
    <property type="project" value="EcoCyc"/>
</dbReference>
<dbReference type="GO" id="GO:0008692">
    <property type="term" value="F:3-hydroxybutyryl-CoA epimerase activity"/>
    <property type="evidence" value="ECO:0007669"/>
    <property type="project" value="UniProtKB-UniRule"/>
</dbReference>
<dbReference type="GO" id="GO:0004300">
    <property type="term" value="F:enoyl-CoA hydratase activity"/>
    <property type="evidence" value="ECO:0000314"/>
    <property type="project" value="EcoCyc"/>
</dbReference>
<dbReference type="GO" id="GO:0016509">
    <property type="term" value="F:long-chain-3-hydroxyacyl-CoA dehydrogenase activity"/>
    <property type="evidence" value="ECO:0000318"/>
    <property type="project" value="GO_Central"/>
</dbReference>
<dbReference type="GO" id="GO:0070403">
    <property type="term" value="F:NAD+ binding"/>
    <property type="evidence" value="ECO:0007669"/>
    <property type="project" value="InterPro"/>
</dbReference>
<dbReference type="GO" id="GO:0006635">
    <property type="term" value="P:fatty acid beta-oxidation"/>
    <property type="evidence" value="ECO:0000314"/>
    <property type="project" value="ComplexPortal"/>
</dbReference>
<dbReference type="CDD" id="cd06558">
    <property type="entry name" value="crotonase-like"/>
    <property type="match status" value="1"/>
</dbReference>
<dbReference type="FunFam" id="1.10.1040.50:FF:000003">
    <property type="entry name" value="Fatty acid oxidation complex subunit alpha"/>
    <property type="match status" value="1"/>
</dbReference>
<dbReference type="FunFam" id="3.90.226.10:FF:000011">
    <property type="entry name" value="Fatty acid oxidation complex subunit alpha"/>
    <property type="match status" value="1"/>
</dbReference>
<dbReference type="FunFam" id="3.40.50.720:FF:000009">
    <property type="entry name" value="Fatty oxidation complex, alpha subunit"/>
    <property type="match status" value="1"/>
</dbReference>
<dbReference type="Gene3D" id="1.10.1040.50">
    <property type="match status" value="1"/>
</dbReference>
<dbReference type="Gene3D" id="3.90.226.10">
    <property type="entry name" value="2-enoyl-CoA Hydratase, Chain A, domain 1"/>
    <property type="match status" value="1"/>
</dbReference>
<dbReference type="Gene3D" id="3.40.50.720">
    <property type="entry name" value="NAD(P)-binding Rossmann-like Domain"/>
    <property type="match status" value="1"/>
</dbReference>
<dbReference type="HAMAP" id="MF_01617">
    <property type="entry name" value="FadJ"/>
    <property type="match status" value="1"/>
</dbReference>
<dbReference type="InterPro" id="IPR006180">
    <property type="entry name" value="3-OHacyl-CoA_DH_CS"/>
</dbReference>
<dbReference type="InterPro" id="IPR006176">
    <property type="entry name" value="3-OHacyl-CoA_DH_NAD-bd"/>
</dbReference>
<dbReference type="InterPro" id="IPR006108">
    <property type="entry name" value="3HC_DH_C"/>
</dbReference>
<dbReference type="InterPro" id="IPR008927">
    <property type="entry name" value="6-PGluconate_DH-like_C_sf"/>
</dbReference>
<dbReference type="InterPro" id="IPR029045">
    <property type="entry name" value="ClpP/crotonase-like_dom_sf"/>
</dbReference>
<dbReference type="InterPro" id="IPR001753">
    <property type="entry name" value="Enoyl-CoA_hydra/iso"/>
</dbReference>
<dbReference type="InterPro" id="IPR050136">
    <property type="entry name" value="FA_oxidation_alpha_subunit"/>
</dbReference>
<dbReference type="InterPro" id="IPR012802">
    <property type="entry name" value="FadJ"/>
</dbReference>
<dbReference type="InterPro" id="IPR036291">
    <property type="entry name" value="NAD(P)-bd_dom_sf"/>
</dbReference>
<dbReference type="NCBIfam" id="TIGR02440">
    <property type="entry name" value="FadJ"/>
    <property type="match status" value="1"/>
</dbReference>
<dbReference type="NCBIfam" id="NF008363">
    <property type="entry name" value="PRK11154.1"/>
    <property type="match status" value="1"/>
</dbReference>
<dbReference type="PANTHER" id="PTHR43612">
    <property type="entry name" value="TRIFUNCTIONAL ENZYME SUBUNIT ALPHA"/>
    <property type="match status" value="1"/>
</dbReference>
<dbReference type="PANTHER" id="PTHR43612:SF3">
    <property type="entry name" value="TRIFUNCTIONAL ENZYME SUBUNIT ALPHA, MITOCHONDRIAL"/>
    <property type="match status" value="1"/>
</dbReference>
<dbReference type="Pfam" id="PF00725">
    <property type="entry name" value="3HCDH"/>
    <property type="match status" value="2"/>
</dbReference>
<dbReference type="Pfam" id="PF02737">
    <property type="entry name" value="3HCDH_N"/>
    <property type="match status" value="1"/>
</dbReference>
<dbReference type="Pfam" id="PF00378">
    <property type="entry name" value="ECH_1"/>
    <property type="match status" value="1"/>
</dbReference>
<dbReference type="SUPFAM" id="SSF48179">
    <property type="entry name" value="6-phosphogluconate dehydrogenase C-terminal domain-like"/>
    <property type="match status" value="2"/>
</dbReference>
<dbReference type="SUPFAM" id="SSF52096">
    <property type="entry name" value="ClpP/crotonase"/>
    <property type="match status" value="1"/>
</dbReference>
<dbReference type="SUPFAM" id="SSF51735">
    <property type="entry name" value="NAD(P)-binding Rossmann-fold domains"/>
    <property type="match status" value="1"/>
</dbReference>
<dbReference type="PROSITE" id="PS00067">
    <property type="entry name" value="3HCDH"/>
    <property type="match status" value="1"/>
</dbReference>
<gene>
    <name type="primary">fadJ</name>
    <name type="synonym">yfcX</name>
    <name type="ordered locus">b2341</name>
    <name type="ordered locus">JW2338</name>
</gene>
<protein>
    <recommendedName>
        <fullName>Fatty acid oxidation complex subunit alpha</fullName>
    </recommendedName>
    <domain>
        <recommendedName>
            <fullName>Enoyl-CoA hydratase/3-hydroxybutyryl-CoA epimerase</fullName>
            <ecNumber evidence="2">4.2.1.17</ecNumber>
            <ecNumber>5.1.2.3</ecNumber>
        </recommendedName>
    </domain>
    <domain>
        <recommendedName>
            <fullName>3-hydroxyacyl-CoA dehydrogenase</fullName>
            <ecNumber evidence="2">1.1.1.35</ecNumber>
        </recommendedName>
    </domain>
</protein>